<gene>
    <name evidence="1" type="primary">hisB</name>
    <name type="ordered locus">Helmi_29300</name>
    <name type="ORF">HM1_3048</name>
</gene>
<reference key="1">
    <citation type="journal article" date="2008" name="J. Bacteriol.">
        <title>The genome of Heliobacterium modesticaldum, a phototrophic representative of the Firmicutes containing the simplest photosynthetic apparatus.</title>
        <authorList>
            <person name="Sattley W.M."/>
            <person name="Madigan M.T."/>
            <person name="Swingley W.D."/>
            <person name="Cheung P.C."/>
            <person name="Clocksin K.M."/>
            <person name="Conrad A.L."/>
            <person name="Dejesa L.C."/>
            <person name="Honchak B.M."/>
            <person name="Jung D.O."/>
            <person name="Karbach L.E."/>
            <person name="Kurdoglu A."/>
            <person name="Lahiri S."/>
            <person name="Mastrian S.D."/>
            <person name="Page L.E."/>
            <person name="Taylor H.L."/>
            <person name="Wang Z.T."/>
            <person name="Raymond J."/>
            <person name="Chen M."/>
            <person name="Blankenship R.E."/>
            <person name="Touchman J.W."/>
        </authorList>
    </citation>
    <scope>NUCLEOTIDE SEQUENCE [LARGE SCALE GENOMIC DNA]</scope>
    <source>
        <strain>ATCC 51547 / Ice1</strain>
    </source>
</reference>
<name>HIS7_HELMI</name>
<organism>
    <name type="scientific">Heliobacterium modesticaldum (strain ATCC 51547 / Ice1)</name>
    <dbReference type="NCBI Taxonomy" id="498761"/>
    <lineage>
        <taxon>Bacteria</taxon>
        <taxon>Bacillati</taxon>
        <taxon>Bacillota</taxon>
        <taxon>Clostridia</taxon>
        <taxon>Eubacteriales</taxon>
        <taxon>Heliobacteriaceae</taxon>
        <taxon>Heliomicrobium</taxon>
    </lineage>
</organism>
<accession>B0TDN0</accession>
<feature type="chain" id="PRO_1000092694" description="Imidazoleglycerol-phosphate dehydratase">
    <location>
        <begin position="1"/>
        <end position="195"/>
    </location>
</feature>
<sequence length="195" mass="21359">MRGASYVRNTAETRISIDLFLDGKGVYDGTTGIGFLDHMFTLLARHGQLDLTIGCQGDLEVDTHHTVEDLGICLGNALAQALGDKKGICRYGHAYVPMDETLVRVCLDLSGRPFLVYKVKIPVERVGQLETEMVEEFFRALSNRAGMNLHIHLLEGGNGHHIIEAIFKAFGRALRQAVAIDPDNAGRVLSTKGVL</sequence>
<dbReference type="EC" id="4.2.1.19" evidence="1"/>
<dbReference type="EMBL" id="CP000930">
    <property type="protein sequence ID" value="ABZ85555.1"/>
    <property type="molecule type" value="Genomic_DNA"/>
</dbReference>
<dbReference type="RefSeq" id="WP_012284030.1">
    <property type="nucleotide sequence ID" value="NC_010337.2"/>
</dbReference>
<dbReference type="SMR" id="B0TDN0"/>
<dbReference type="STRING" id="498761.HM1_3048"/>
<dbReference type="KEGG" id="hmo:HM1_3048"/>
<dbReference type="eggNOG" id="COG0131">
    <property type="taxonomic scope" value="Bacteria"/>
</dbReference>
<dbReference type="HOGENOM" id="CLU_044308_2_0_9"/>
<dbReference type="OrthoDB" id="9790411at2"/>
<dbReference type="UniPathway" id="UPA00031">
    <property type="reaction ID" value="UER00011"/>
</dbReference>
<dbReference type="Proteomes" id="UP000008550">
    <property type="component" value="Chromosome"/>
</dbReference>
<dbReference type="GO" id="GO:0005737">
    <property type="term" value="C:cytoplasm"/>
    <property type="evidence" value="ECO:0007669"/>
    <property type="project" value="UniProtKB-SubCell"/>
</dbReference>
<dbReference type="GO" id="GO:0004424">
    <property type="term" value="F:imidazoleglycerol-phosphate dehydratase activity"/>
    <property type="evidence" value="ECO:0007669"/>
    <property type="project" value="UniProtKB-UniRule"/>
</dbReference>
<dbReference type="GO" id="GO:0000105">
    <property type="term" value="P:L-histidine biosynthetic process"/>
    <property type="evidence" value="ECO:0007669"/>
    <property type="project" value="UniProtKB-UniRule"/>
</dbReference>
<dbReference type="CDD" id="cd07914">
    <property type="entry name" value="IGPD"/>
    <property type="match status" value="1"/>
</dbReference>
<dbReference type="FunFam" id="3.30.230.40:FF:000001">
    <property type="entry name" value="Imidazoleglycerol-phosphate dehydratase HisB"/>
    <property type="match status" value="1"/>
</dbReference>
<dbReference type="FunFam" id="3.30.230.40:FF:000003">
    <property type="entry name" value="Imidazoleglycerol-phosphate dehydratase HisB"/>
    <property type="match status" value="1"/>
</dbReference>
<dbReference type="Gene3D" id="3.30.230.40">
    <property type="entry name" value="Imidazole glycerol phosphate dehydratase, domain 1"/>
    <property type="match status" value="2"/>
</dbReference>
<dbReference type="HAMAP" id="MF_00076">
    <property type="entry name" value="HisB"/>
    <property type="match status" value="1"/>
</dbReference>
<dbReference type="InterPro" id="IPR038494">
    <property type="entry name" value="IGPD_sf"/>
</dbReference>
<dbReference type="InterPro" id="IPR000807">
    <property type="entry name" value="ImidazoleglycerolP_deHydtase"/>
</dbReference>
<dbReference type="InterPro" id="IPR020565">
    <property type="entry name" value="ImidazoleglycerP_deHydtase_CS"/>
</dbReference>
<dbReference type="InterPro" id="IPR020568">
    <property type="entry name" value="Ribosomal_Su5_D2-typ_SF"/>
</dbReference>
<dbReference type="NCBIfam" id="NF002109">
    <property type="entry name" value="PRK00951.1-5"/>
    <property type="match status" value="1"/>
</dbReference>
<dbReference type="NCBIfam" id="NF002111">
    <property type="entry name" value="PRK00951.2-1"/>
    <property type="match status" value="1"/>
</dbReference>
<dbReference type="NCBIfam" id="NF002114">
    <property type="entry name" value="PRK00951.2-4"/>
    <property type="match status" value="1"/>
</dbReference>
<dbReference type="PANTHER" id="PTHR23133:SF2">
    <property type="entry name" value="IMIDAZOLEGLYCEROL-PHOSPHATE DEHYDRATASE"/>
    <property type="match status" value="1"/>
</dbReference>
<dbReference type="PANTHER" id="PTHR23133">
    <property type="entry name" value="IMIDAZOLEGLYCEROL-PHOSPHATE DEHYDRATASE HIS7"/>
    <property type="match status" value="1"/>
</dbReference>
<dbReference type="Pfam" id="PF00475">
    <property type="entry name" value="IGPD"/>
    <property type="match status" value="1"/>
</dbReference>
<dbReference type="SUPFAM" id="SSF54211">
    <property type="entry name" value="Ribosomal protein S5 domain 2-like"/>
    <property type="match status" value="2"/>
</dbReference>
<dbReference type="PROSITE" id="PS00954">
    <property type="entry name" value="IGP_DEHYDRATASE_1"/>
    <property type="match status" value="1"/>
</dbReference>
<dbReference type="PROSITE" id="PS00955">
    <property type="entry name" value="IGP_DEHYDRATASE_2"/>
    <property type="match status" value="1"/>
</dbReference>
<comment type="catalytic activity">
    <reaction evidence="1">
        <text>D-erythro-1-(imidazol-4-yl)glycerol 3-phosphate = 3-(imidazol-4-yl)-2-oxopropyl phosphate + H2O</text>
        <dbReference type="Rhea" id="RHEA:11040"/>
        <dbReference type="ChEBI" id="CHEBI:15377"/>
        <dbReference type="ChEBI" id="CHEBI:57766"/>
        <dbReference type="ChEBI" id="CHEBI:58278"/>
        <dbReference type="EC" id="4.2.1.19"/>
    </reaction>
</comment>
<comment type="pathway">
    <text evidence="1">Amino-acid biosynthesis; L-histidine biosynthesis; L-histidine from 5-phospho-alpha-D-ribose 1-diphosphate: step 6/9.</text>
</comment>
<comment type="subcellular location">
    <subcellularLocation>
        <location evidence="1">Cytoplasm</location>
    </subcellularLocation>
</comment>
<comment type="similarity">
    <text evidence="1">Belongs to the imidazoleglycerol-phosphate dehydratase family.</text>
</comment>
<protein>
    <recommendedName>
        <fullName evidence="1">Imidazoleglycerol-phosphate dehydratase</fullName>
        <shortName evidence="1">IGPD</shortName>
        <ecNumber evidence="1">4.2.1.19</ecNumber>
    </recommendedName>
</protein>
<keyword id="KW-0028">Amino-acid biosynthesis</keyword>
<keyword id="KW-0963">Cytoplasm</keyword>
<keyword id="KW-0368">Histidine biosynthesis</keyword>
<keyword id="KW-0456">Lyase</keyword>
<keyword id="KW-1185">Reference proteome</keyword>
<evidence type="ECO:0000255" key="1">
    <source>
        <dbReference type="HAMAP-Rule" id="MF_00076"/>
    </source>
</evidence>
<proteinExistence type="inferred from homology"/>